<reference key="1">
    <citation type="journal article" date="2006" name="Mol. Microbiol.">
        <title>Role of pathogenicity island-associated integrases in the genome plasticity of uropathogenic Escherichia coli strain 536.</title>
        <authorList>
            <person name="Hochhut B."/>
            <person name="Wilde C."/>
            <person name="Balling G."/>
            <person name="Middendorf B."/>
            <person name="Dobrindt U."/>
            <person name="Brzuszkiewicz E."/>
            <person name="Gottschalk G."/>
            <person name="Carniel E."/>
            <person name="Hacker J."/>
        </authorList>
    </citation>
    <scope>NUCLEOTIDE SEQUENCE [LARGE SCALE GENOMIC DNA]</scope>
    <source>
        <strain>536 / UPEC</strain>
    </source>
</reference>
<organism>
    <name type="scientific">Escherichia coli O6:K15:H31 (strain 536 / UPEC)</name>
    <dbReference type="NCBI Taxonomy" id="362663"/>
    <lineage>
        <taxon>Bacteria</taxon>
        <taxon>Pseudomonadati</taxon>
        <taxon>Pseudomonadota</taxon>
        <taxon>Gammaproteobacteria</taxon>
        <taxon>Enterobacterales</taxon>
        <taxon>Enterobacteriaceae</taxon>
        <taxon>Escherichia</taxon>
    </lineage>
</organism>
<sequence length="523" mass="57284">MSQQVIIFDTTLRDGEQALQASLSVKEKLQIALALERMGVDVMEVGFPVSSPGDFESVQTIARQVKNSRVCALARCVEKDIDVAAESLKVAEAFRIHTFIATSPMHIATKLRSTLDEVIERAIYMVKRARNYTDDVEFSCEDAGRTPIADLARVVEAAINAGATTINIPDTVGYTMPFEFAGIISGLYERVPNIDKAIISVHTHDDLGLAVGNSLAAVHAGARQVEGAMNGIGERAGNCSLEEVIMAIKVRKDILNVHTAINHQEIWRTSQLVSQICNMPIPANKAIVGSGAFAHSSGIHQDGVLKNRENYEIMTPESIGLNQIQLNLTSRSGRAAVKHRMDEMGYKESEYNLDNLYDAFLKLADKKGQVFDYDLEALAFIGKQQEEPEHFRLDYFSVQSGSNDIATAAVKLACGEEVKAEAANGNGPVDAVYQAINRITDYNVELVKYSLTAKGHGKDALGQVDIVANYNGRRFHGVGLATDIVESSAKAMVHVLNNIWRAAEVEKELQRKAQHNENNKETV</sequence>
<evidence type="ECO:0000255" key="1">
    <source>
        <dbReference type="HAMAP-Rule" id="MF_01025"/>
    </source>
</evidence>
<feature type="chain" id="PRO_1000149192" description="2-isopropylmalate synthase">
    <location>
        <begin position="1"/>
        <end position="523"/>
    </location>
</feature>
<feature type="domain" description="Pyruvate carboxyltransferase" evidence="1">
    <location>
        <begin position="5"/>
        <end position="267"/>
    </location>
</feature>
<feature type="region of interest" description="Regulatory domain" evidence="1">
    <location>
        <begin position="392"/>
        <end position="523"/>
    </location>
</feature>
<feature type="binding site" evidence="1">
    <location>
        <position position="14"/>
    </location>
    <ligand>
        <name>Mn(2+)</name>
        <dbReference type="ChEBI" id="CHEBI:29035"/>
    </ligand>
</feature>
<feature type="binding site" evidence="1">
    <location>
        <position position="202"/>
    </location>
    <ligand>
        <name>Mn(2+)</name>
        <dbReference type="ChEBI" id="CHEBI:29035"/>
    </ligand>
</feature>
<feature type="binding site" evidence="1">
    <location>
        <position position="204"/>
    </location>
    <ligand>
        <name>Mn(2+)</name>
        <dbReference type="ChEBI" id="CHEBI:29035"/>
    </ligand>
</feature>
<feature type="binding site" evidence="1">
    <location>
        <position position="238"/>
    </location>
    <ligand>
        <name>Mn(2+)</name>
        <dbReference type="ChEBI" id="CHEBI:29035"/>
    </ligand>
</feature>
<accession>Q0TLR5</accession>
<keyword id="KW-0028">Amino-acid biosynthesis</keyword>
<keyword id="KW-0100">Branched-chain amino acid biosynthesis</keyword>
<keyword id="KW-0963">Cytoplasm</keyword>
<keyword id="KW-0432">Leucine biosynthesis</keyword>
<keyword id="KW-0464">Manganese</keyword>
<keyword id="KW-0479">Metal-binding</keyword>
<keyword id="KW-0808">Transferase</keyword>
<name>LEU1_ECOL5</name>
<proteinExistence type="inferred from homology"/>
<protein>
    <recommendedName>
        <fullName evidence="1">2-isopropylmalate synthase</fullName>
        <ecNumber evidence="1">2.3.3.13</ecNumber>
    </recommendedName>
    <alternativeName>
        <fullName evidence="1">Alpha-IPM synthase</fullName>
    </alternativeName>
    <alternativeName>
        <fullName evidence="1">Alpha-isopropylmalate synthase</fullName>
    </alternativeName>
</protein>
<gene>
    <name evidence="1" type="primary">leuA</name>
    <name type="ordered locus">ECP_0076</name>
</gene>
<dbReference type="EC" id="2.3.3.13" evidence="1"/>
<dbReference type="EMBL" id="CP000247">
    <property type="protein sequence ID" value="ABG68116.1"/>
    <property type="molecule type" value="Genomic_DNA"/>
</dbReference>
<dbReference type="RefSeq" id="WP_000082846.1">
    <property type="nucleotide sequence ID" value="NC_008253.1"/>
</dbReference>
<dbReference type="SMR" id="Q0TLR5"/>
<dbReference type="GeneID" id="75202109"/>
<dbReference type="KEGG" id="ecp:ECP_0076"/>
<dbReference type="HOGENOM" id="CLU_022158_0_1_6"/>
<dbReference type="UniPathway" id="UPA00048">
    <property type="reaction ID" value="UER00070"/>
</dbReference>
<dbReference type="Proteomes" id="UP000009182">
    <property type="component" value="Chromosome"/>
</dbReference>
<dbReference type="GO" id="GO:0005829">
    <property type="term" value="C:cytosol"/>
    <property type="evidence" value="ECO:0007669"/>
    <property type="project" value="TreeGrafter"/>
</dbReference>
<dbReference type="GO" id="GO:0003852">
    <property type="term" value="F:2-isopropylmalate synthase activity"/>
    <property type="evidence" value="ECO:0007669"/>
    <property type="project" value="UniProtKB-UniRule"/>
</dbReference>
<dbReference type="GO" id="GO:0003985">
    <property type="term" value="F:acetyl-CoA C-acetyltransferase activity"/>
    <property type="evidence" value="ECO:0007669"/>
    <property type="project" value="UniProtKB-UniRule"/>
</dbReference>
<dbReference type="GO" id="GO:0030145">
    <property type="term" value="F:manganese ion binding"/>
    <property type="evidence" value="ECO:0007669"/>
    <property type="project" value="UniProtKB-UniRule"/>
</dbReference>
<dbReference type="GO" id="GO:0009098">
    <property type="term" value="P:L-leucine biosynthetic process"/>
    <property type="evidence" value="ECO:0007669"/>
    <property type="project" value="UniProtKB-UniRule"/>
</dbReference>
<dbReference type="CDD" id="cd07940">
    <property type="entry name" value="DRE_TIM_IPMS"/>
    <property type="match status" value="1"/>
</dbReference>
<dbReference type="FunFam" id="1.10.238.260:FF:000001">
    <property type="entry name" value="2-isopropylmalate synthase"/>
    <property type="match status" value="1"/>
</dbReference>
<dbReference type="FunFam" id="3.20.20.70:FF:000010">
    <property type="entry name" value="2-isopropylmalate synthase"/>
    <property type="match status" value="1"/>
</dbReference>
<dbReference type="FunFam" id="3.30.160.270:FF:000001">
    <property type="entry name" value="2-isopropylmalate synthase"/>
    <property type="match status" value="1"/>
</dbReference>
<dbReference type="Gene3D" id="1.10.238.260">
    <property type="match status" value="1"/>
</dbReference>
<dbReference type="Gene3D" id="3.30.160.270">
    <property type="match status" value="1"/>
</dbReference>
<dbReference type="Gene3D" id="3.20.20.70">
    <property type="entry name" value="Aldolase class I"/>
    <property type="match status" value="1"/>
</dbReference>
<dbReference type="HAMAP" id="MF_01025">
    <property type="entry name" value="LeuA_type1"/>
    <property type="match status" value="1"/>
</dbReference>
<dbReference type="InterPro" id="IPR050073">
    <property type="entry name" value="2-IPM_HCS-like"/>
</dbReference>
<dbReference type="InterPro" id="IPR013709">
    <property type="entry name" value="2-isopropylmalate_synth_dimer"/>
</dbReference>
<dbReference type="InterPro" id="IPR002034">
    <property type="entry name" value="AIPM/Hcit_synth_CS"/>
</dbReference>
<dbReference type="InterPro" id="IPR013785">
    <property type="entry name" value="Aldolase_TIM"/>
</dbReference>
<dbReference type="InterPro" id="IPR054691">
    <property type="entry name" value="LeuA/HCS_post-cat"/>
</dbReference>
<dbReference type="InterPro" id="IPR036230">
    <property type="entry name" value="LeuA_allosteric_dom_sf"/>
</dbReference>
<dbReference type="InterPro" id="IPR005671">
    <property type="entry name" value="LeuA_bact_synth"/>
</dbReference>
<dbReference type="InterPro" id="IPR000891">
    <property type="entry name" value="PYR_CT"/>
</dbReference>
<dbReference type="NCBIfam" id="TIGR00973">
    <property type="entry name" value="leuA_bact"/>
    <property type="match status" value="1"/>
</dbReference>
<dbReference type="NCBIfam" id="NF002084">
    <property type="entry name" value="PRK00915.1-1"/>
    <property type="match status" value="1"/>
</dbReference>
<dbReference type="NCBIfam" id="NF002086">
    <property type="entry name" value="PRK00915.1-3"/>
    <property type="match status" value="1"/>
</dbReference>
<dbReference type="PANTHER" id="PTHR10277:SF9">
    <property type="entry name" value="2-ISOPROPYLMALATE SYNTHASE 1, CHLOROPLASTIC-RELATED"/>
    <property type="match status" value="1"/>
</dbReference>
<dbReference type="PANTHER" id="PTHR10277">
    <property type="entry name" value="HOMOCITRATE SYNTHASE-RELATED"/>
    <property type="match status" value="1"/>
</dbReference>
<dbReference type="Pfam" id="PF22617">
    <property type="entry name" value="HCS_D2"/>
    <property type="match status" value="1"/>
</dbReference>
<dbReference type="Pfam" id="PF00682">
    <property type="entry name" value="HMGL-like"/>
    <property type="match status" value="1"/>
</dbReference>
<dbReference type="Pfam" id="PF08502">
    <property type="entry name" value="LeuA_dimer"/>
    <property type="match status" value="1"/>
</dbReference>
<dbReference type="SMART" id="SM00917">
    <property type="entry name" value="LeuA_dimer"/>
    <property type="match status" value="1"/>
</dbReference>
<dbReference type="SUPFAM" id="SSF110921">
    <property type="entry name" value="2-isopropylmalate synthase LeuA, allosteric (dimerisation) domain"/>
    <property type="match status" value="1"/>
</dbReference>
<dbReference type="SUPFAM" id="SSF51569">
    <property type="entry name" value="Aldolase"/>
    <property type="match status" value="1"/>
</dbReference>
<dbReference type="PROSITE" id="PS00815">
    <property type="entry name" value="AIPM_HOMOCIT_SYNTH_1"/>
    <property type="match status" value="1"/>
</dbReference>
<dbReference type="PROSITE" id="PS00816">
    <property type="entry name" value="AIPM_HOMOCIT_SYNTH_2"/>
    <property type="match status" value="1"/>
</dbReference>
<dbReference type="PROSITE" id="PS50991">
    <property type="entry name" value="PYR_CT"/>
    <property type="match status" value="1"/>
</dbReference>
<comment type="function">
    <text evidence="1">Catalyzes the condensation of the acetyl group of acetyl-CoA with 3-methyl-2-oxobutanoate (2-ketoisovalerate) to form 3-carboxy-3-hydroxy-4-methylpentanoate (2-isopropylmalate).</text>
</comment>
<comment type="catalytic activity">
    <reaction evidence="1">
        <text>3-methyl-2-oxobutanoate + acetyl-CoA + H2O = (2S)-2-isopropylmalate + CoA + H(+)</text>
        <dbReference type="Rhea" id="RHEA:21524"/>
        <dbReference type="ChEBI" id="CHEBI:1178"/>
        <dbReference type="ChEBI" id="CHEBI:11851"/>
        <dbReference type="ChEBI" id="CHEBI:15377"/>
        <dbReference type="ChEBI" id="CHEBI:15378"/>
        <dbReference type="ChEBI" id="CHEBI:57287"/>
        <dbReference type="ChEBI" id="CHEBI:57288"/>
        <dbReference type="EC" id="2.3.3.13"/>
    </reaction>
</comment>
<comment type="cofactor">
    <cofactor evidence="1">
        <name>Mn(2+)</name>
        <dbReference type="ChEBI" id="CHEBI:29035"/>
    </cofactor>
</comment>
<comment type="pathway">
    <text evidence="1">Amino-acid biosynthesis; L-leucine biosynthesis; L-leucine from 3-methyl-2-oxobutanoate: step 1/4.</text>
</comment>
<comment type="subunit">
    <text evidence="1">Homodimer.</text>
</comment>
<comment type="subcellular location">
    <subcellularLocation>
        <location evidence="1">Cytoplasm</location>
    </subcellularLocation>
</comment>
<comment type="similarity">
    <text evidence="1">Belongs to the alpha-IPM synthase/homocitrate synthase family. LeuA type 1 subfamily.</text>
</comment>